<organism>
    <name type="scientific">Coxiella burnetii (strain CbuK_Q154)</name>
    <name type="common">Coxiella burnetii (strain Q154)</name>
    <dbReference type="NCBI Taxonomy" id="434924"/>
    <lineage>
        <taxon>Bacteria</taxon>
        <taxon>Pseudomonadati</taxon>
        <taxon>Pseudomonadota</taxon>
        <taxon>Gammaproteobacteria</taxon>
        <taxon>Legionellales</taxon>
        <taxon>Coxiellaceae</taxon>
        <taxon>Coxiella</taxon>
    </lineage>
</organism>
<sequence>MAEKLHISVLCGGQSTEHEISIQSAKNIVNTLDAAKYLISLIFIDHVGRWYLIDQPEMFLAHSPDHLVKEGSARPITIAFGDAAKPWQSLNGDGRRYSADCVFPMVHGTQGEDGALQGLLELLNLPYVGANVQSSAVCMEKDLTKTVLRAGGIPVVDWHTLSPRDATEGVYQRLLDRWGTSELFVKAVSLGSSVATLPVKTETEFTKAVKEVFRYDDRLMVEPRIRGREIECAVLGNGAPKASLPGEIIPHHDYYSYDAKYLDPNGATTTTSVDLSESVTKQIQQIAIDAFKMVHCSGMARVDFFVTPNNKVLVNEINTIPGFTNISMYPKMWEASGLPCPNLLDQLIELAIDRHQEQQKLIRCYEVKARSL</sequence>
<keyword id="KW-0067">ATP-binding</keyword>
<keyword id="KW-0133">Cell shape</keyword>
<keyword id="KW-0961">Cell wall biogenesis/degradation</keyword>
<keyword id="KW-0963">Cytoplasm</keyword>
<keyword id="KW-0436">Ligase</keyword>
<keyword id="KW-0460">Magnesium</keyword>
<keyword id="KW-0464">Manganese</keyword>
<keyword id="KW-0479">Metal-binding</keyword>
<keyword id="KW-0547">Nucleotide-binding</keyword>
<keyword id="KW-0573">Peptidoglycan synthesis</keyword>
<evidence type="ECO:0000250" key="1"/>
<evidence type="ECO:0000255" key="2">
    <source>
        <dbReference type="HAMAP-Rule" id="MF_00047"/>
    </source>
</evidence>
<protein>
    <recommendedName>
        <fullName evidence="2">D-alanine--D-alanine ligase</fullName>
        <ecNumber evidence="2">6.3.2.4</ecNumber>
    </recommendedName>
    <alternativeName>
        <fullName evidence="2">D-Ala-D-Ala ligase</fullName>
    </alternativeName>
    <alternativeName>
        <fullName evidence="2">D-alanylalanine synthetase</fullName>
    </alternativeName>
</protein>
<accession>B6J7Z1</accession>
<feature type="chain" id="PRO_1000091178" description="D-alanine--D-alanine ligase">
    <location>
        <begin position="1"/>
        <end position="372"/>
    </location>
</feature>
<feature type="domain" description="ATP-grasp" evidence="2">
    <location>
        <begin position="145"/>
        <end position="349"/>
    </location>
</feature>
<feature type="binding site" evidence="2">
    <location>
        <begin position="176"/>
        <end position="231"/>
    </location>
    <ligand>
        <name>ATP</name>
        <dbReference type="ChEBI" id="CHEBI:30616"/>
    </ligand>
</feature>
<feature type="binding site" evidence="2">
    <location>
        <position position="303"/>
    </location>
    <ligand>
        <name>Mg(2+)</name>
        <dbReference type="ChEBI" id="CHEBI:18420"/>
        <label>1</label>
    </ligand>
</feature>
<feature type="binding site" evidence="2">
    <location>
        <position position="316"/>
    </location>
    <ligand>
        <name>Mg(2+)</name>
        <dbReference type="ChEBI" id="CHEBI:18420"/>
        <label>1</label>
    </ligand>
</feature>
<feature type="binding site" evidence="2">
    <location>
        <position position="316"/>
    </location>
    <ligand>
        <name>Mg(2+)</name>
        <dbReference type="ChEBI" id="CHEBI:18420"/>
        <label>2</label>
    </ligand>
</feature>
<feature type="binding site" evidence="2">
    <location>
        <position position="318"/>
    </location>
    <ligand>
        <name>Mg(2+)</name>
        <dbReference type="ChEBI" id="CHEBI:18420"/>
        <label>2</label>
    </ligand>
</feature>
<gene>
    <name evidence="2" type="primary">ddl</name>
    <name type="ordered locus">CbuK_1202</name>
</gene>
<name>DDL_COXB1</name>
<proteinExistence type="inferred from homology"/>
<reference key="1">
    <citation type="journal article" date="2009" name="Infect. Immun.">
        <title>Comparative genomics reveal extensive transposon-mediated genomic plasticity and diversity among potential effector proteins within the genus Coxiella.</title>
        <authorList>
            <person name="Beare P.A."/>
            <person name="Unsworth N."/>
            <person name="Andoh M."/>
            <person name="Voth D.E."/>
            <person name="Omsland A."/>
            <person name="Gilk S.D."/>
            <person name="Williams K.P."/>
            <person name="Sobral B.W."/>
            <person name="Kupko J.J. III"/>
            <person name="Porcella S.F."/>
            <person name="Samuel J.E."/>
            <person name="Heinzen R.A."/>
        </authorList>
    </citation>
    <scope>NUCLEOTIDE SEQUENCE [LARGE SCALE GENOMIC DNA]</scope>
    <source>
        <strain>CbuK_Q154</strain>
    </source>
</reference>
<dbReference type="EC" id="6.3.2.4" evidence="2"/>
<dbReference type="EMBL" id="CP001020">
    <property type="protein sequence ID" value="ACJ20390.1"/>
    <property type="molecule type" value="Genomic_DNA"/>
</dbReference>
<dbReference type="RefSeq" id="WP_005770965.1">
    <property type="nucleotide sequence ID" value="NC_011528.1"/>
</dbReference>
<dbReference type="SMR" id="B6J7Z1"/>
<dbReference type="KEGG" id="cbc:CbuK_1202"/>
<dbReference type="HOGENOM" id="CLU_039268_0_1_6"/>
<dbReference type="UniPathway" id="UPA00219"/>
<dbReference type="GO" id="GO:0005829">
    <property type="term" value="C:cytosol"/>
    <property type="evidence" value="ECO:0007669"/>
    <property type="project" value="TreeGrafter"/>
</dbReference>
<dbReference type="GO" id="GO:0005524">
    <property type="term" value="F:ATP binding"/>
    <property type="evidence" value="ECO:0007669"/>
    <property type="project" value="UniProtKB-KW"/>
</dbReference>
<dbReference type="GO" id="GO:0008716">
    <property type="term" value="F:D-alanine-D-alanine ligase activity"/>
    <property type="evidence" value="ECO:0007669"/>
    <property type="project" value="UniProtKB-UniRule"/>
</dbReference>
<dbReference type="GO" id="GO:0046872">
    <property type="term" value="F:metal ion binding"/>
    <property type="evidence" value="ECO:0007669"/>
    <property type="project" value="UniProtKB-KW"/>
</dbReference>
<dbReference type="GO" id="GO:0071555">
    <property type="term" value="P:cell wall organization"/>
    <property type="evidence" value="ECO:0007669"/>
    <property type="project" value="UniProtKB-KW"/>
</dbReference>
<dbReference type="GO" id="GO:0009252">
    <property type="term" value="P:peptidoglycan biosynthetic process"/>
    <property type="evidence" value="ECO:0007669"/>
    <property type="project" value="UniProtKB-UniRule"/>
</dbReference>
<dbReference type="GO" id="GO:0008360">
    <property type="term" value="P:regulation of cell shape"/>
    <property type="evidence" value="ECO:0007669"/>
    <property type="project" value="UniProtKB-KW"/>
</dbReference>
<dbReference type="FunFam" id="3.30.470.20:FF:000008">
    <property type="entry name" value="D-alanine--D-alanine ligase"/>
    <property type="match status" value="1"/>
</dbReference>
<dbReference type="Gene3D" id="3.40.50.20">
    <property type="match status" value="1"/>
</dbReference>
<dbReference type="Gene3D" id="3.30.1490.20">
    <property type="entry name" value="ATP-grasp fold, A domain"/>
    <property type="match status" value="1"/>
</dbReference>
<dbReference type="Gene3D" id="3.30.470.20">
    <property type="entry name" value="ATP-grasp fold, B domain"/>
    <property type="match status" value="1"/>
</dbReference>
<dbReference type="HAMAP" id="MF_00047">
    <property type="entry name" value="Dala_Dala_lig"/>
    <property type="match status" value="1"/>
</dbReference>
<dbReference type="InterPro" id="IPR011761">
    <property type="entry name" value="ATP-grasp"/>
</dbReference>
<dbReference type="InterPro" id="IPR013815">
    <property type="entry name" value="ATP_grasp_subdomain_1"/>
</dbReference>
<dbReference type="InterPro" id="IPR000291">
    <property type="entry name" value="D-Ala_lig_Van_CS"/>
</dbReference>
<dbReference type="InterPro" id="IPR005905">
    <property type="entry name" value="D_ala_D_ala"/>
</dbReference>
<dbReference type="InterPro" id="IPR011095">
    <property type="entry name" value="Dala_Dala_lig_C"/>
</dbReference>
<dbReference type="InterPro" id="IPR011127">
    <property type="entry name" value="Dala_Dala_lig_N"/>
</dbReference>
<dbReference type="InterPro" id="IPR016185">
    <property type="entry name" value="PreATP-grasp_dom_sf"/>
</dbReference>
<dbReference type="NCBIfam" id="TIGR01205">
    <property type="entry name" value="D_ala_D_alaTIGR"/>
    <property type="match status" value="1"/>
</dbReference>
<dbReference type="NCBIfam" id="NF002528">
    <property type="entry name" value="PRK01966.1-4"/>
    <property type="match status" value="1"/>
</dbReference>
<dbReference type="PANTHER" id="PTHR23132">
    <property type="entry name" value="D-ALANINE--D-ALANINE LIGASE"/>
    <property type="match status" value="1"/>
</dbReference>
<dbReference type="PANTHER" id="PTHR23132:SF25">
    <property type="entry name" value="D-ALANINE--D-ALANINE LIGASE A"/>
    <property type="match status" value="1"/>
</dbReference>
<dbReference type="Pfam" id="PF07478">
    <property type="entry name" value="Dala_Dala_lig_C"/>
    <property type="match status" value="1"/>
</dbReference>
<dbReference type="Pfam" id="PF01820">
    <property type="entry name" value="Dala_Dala_lig_N"/>
    <property type="match status" value="1"/>
</dbReference>
<dbReference type="PIRSF" id="PIRSF039102">
    <property type="entry name" value="Ddl/VanB"/>
    <property type="match status" value="1"/>
</dbReference>
<dbReference type="SUPFAM" id="SSF56059">
    <property type="entry name" value="Glutathione synthetase ATP-binding domain-like"/>
    <property type="match status" value="1"/>
</dbReference>
<dbReference type="SUPFAM" id="SSF52440">
    <property type="entry name" value="PreATP-grasp domain"/>
    <property type="match status" value="1"/>
</dbReference>
<dbReference type="PROSITE" id="PS50975">
    <property type="entry name" value="ATP_GRASP"/>
    <property type="match status" value="1"/>
</dbReference>
<dbReference type="PROSITE" id="PS00843">
    <property type="entry name" value="DALA_DALA_LIGASE_1"/>
    <property type="match status" value="1"/>
</dbReference>
<dbReference type="PROSITE" id="PS00844">
    <property type="entry name" value="DALA_DALA_LIGASE_2"/>
    <property type="match status" value="1"/>
</dbReference>
<comment type="function">
    <text evidence="2">Cell wall formation.</text>
</comment>
<comment type="catalytic activity">
    <reaction evidence="2">
        <text>2 D-alanine + ATP = D-alanyl-D-alanine + ADP + phosphate + H(+)</text>
        <dbReference type="Rhea" id="RHEA:11224"/>
        <dbReference type="ChEBI" id="CHEBI:15378"/>
        <dbReference type="ChEBI" id="CHEBI:30616"/>
        <dbReference type="ChEBI" id="CHEBI:43474"/>
        <dbReference type="ChEBI" id="CHEBI:57416"/>
        <dbReference type="ChEBI" id="CHEBI:57822"/>
        <dbReference type="ChEBI" id="CHEBI:456216"/>
        <dbReference type="EC" id="6.3.2.4"/>
    </reaction>
</comment>
<comment type="cofactor">
    <cofactor evidence="1">
        <name>Mg(2+)</name>
        <dbReference type="ChEBI" id="CHEBI:18420"/>
    </cofactor>
    <cofactor evidence="1">
        <name>Mn(2+)</name>
        <dbReference type="ChEBI" id="CHEBI:29035"/>
    </cofactor>
    <text evidence="1">Binds 2 magnesium or manganese ions per subunit.</text>
</comment>
<comment type="pathway">
    <text evidence="2">Cell wall biogenesis; peptidoglycan biosynthesis.</text>
</comment>
<comment type="subcellular location">
    <subcellularLocation>
        <location evidence="2">Cytoplasm</location>
    </subcellularLocation>
</comment>
<comment type="similarity">
    <text evidence="2">Belongs to the D-alanine--D-alanine ligase family.</text>
</comment>